<organism>
    <name type="scientific">Campylobacter curvus (strain 525.92)</name>
    <dbReference type="NCBI Taxonomy" id="360105"/>
    <lineage>
        <taxon>Bacteria</taxon>
        <taxon>Pseudomonadati</taxon>
        <taxon>Campylobacterota</taxon>
        <taxon>Epsilonproteobacteria</taxon>
        <taxon>Campylobacterales</taxon>
        <taxon>Campylobacteraceae</taxon>
        <taxon>Campylobacter</taxon>
    </lineage>
</organism>
<feature type="chain" id="PRO_0000347539" description="Alanine--tRNA ligase">
    <location>
        <begin position="1"/>
        <end position="852"/>
    </location>
</feature>
<feature type="binding site" evidence="1">
    <location>
        <position position="554"/>
    </location>
    <ligand>
        <name>Zn(2+)</name>
        <dbReference type="ChEBI" id="CHEBI:29105"/>
    </ligand>
</feature>
<feature type="binding site" evidence="1">
    <location>
        <position position="558"/>
    </location>
    <ligand>
        <name>Zn(2+)</name>
        <dbReference type="ChEBI" id="CHEBI:29105"/>
    </ligand>
</feature>
<feature type="binding site" evidence="1">
    <location>
        <position position="656"/>
    </location>
    <ligand>
        <name>Zn(2+)</name>
        <dbReference type="ChEBI" id="CHEBI:29105"/>
    </ligand>
</feature>
<feature type="binding site" evidence="1">
    <location>
        <position position="660"/>
    </location>
    <ligand>
        <name>Zn(2+)</name>
        <dbReference type="ChEBI" id="CHEBI:29105"/>
    </ligand>
</feature>
<evidence type="ECO:0000255" key="1">
    <source>
        <dbReference type="HAMAP-Rule" id="MF_00036"/>
    </source>
</evidence>
<gene>
    <name evidence="1" type="primary">alaS</name>
    <name type="ordered locus">Ccur92_12420</name>
    <name type="ORF">CCV52592_0686</name>
</gene>
<dbReference type="EC" id="6.1.1.7" evidence="1"/>
<dbReference type="EMBL" id="CP000767">
    <property type="protein sequence ID" value="EAU00418.1"/>
    <property type="molecule type" value="Genomic_DNA"/>
</dbReference>
<dbReference type="RefSeq" id="WP_011992475.1">
    <property type="nucleotide sequence ID" value="NC_009715.2"/>
</dbReference>
<dbReference type="SMR" id="A7GZA4"/>
<dbReference type="STRING" id="360105.CCV52592_0686"/>
<dbReference type="KEGG" id="ccv:CCV52592_0686"/>
<dbReference type="HOGENOM" id="CLU_004485_1_1_7"/>
<dbReference type="OrthoDB" id="9803884at2"/>
<dbReference type="Proteomes" id="UP000006380">
    <property type="component" value="Chromosome"/>
</dbReference>
<dbReference type="GO" id="GO:0005829">
    <property type="term" value="C:cytosol"/>
    <property type="evidence" value="ECO:0007669"/>
    <property type="project" value="TreeGrafter"/>
</dbReference>
<dbReference type="GO" id="GO:0004813">
    <property type="term" value="F:alanine-tRNA ligase activity"/>
    <property type="evidence" value="ECO:0007669"/>
    <property type="project" value="UniProtKB-UniRule"/>
</dbReference>
<dbReference type="GO" id="GO:0002161">
    <property type="term" value="F:aminoacyl-tRNA deacylase activity"/>
    <property type="evidence" value="ECO:0007669"/>
    <property type="project" value="TreeGrafter"/>
</dbReference>
<dbReference type="GO" id="GO:0005524">
    <property type="term" value="F:ATP binding"/>
    <property type="evidence" value="ECO:0007669"/>
    <property type="project" value="UniProtKB-UniRule"/>
</dbReference>
<dbReference type="GO" id="GO:0000049">
    <property type="term" value="F:tRNA binding"/>
    <property type="evidence" value="ECO:0007669"/>
    <property type="project" value="UniProtKB-KW"/>
</dbReference>
<dbReference type="GO" id="GO:0008270">
    <property type="term" value="F:zinc ion binding"/>
    <property type="evidence" value="ECO:0007669"/>
    <property type="project" value="UniProtKB-UniRule"/>
</dbReference>
<dbReference type="GO" id="GO:0006419">
    <property type="term" value="P:alanyl-tRNA aminoacylation"/>
    <property type="evidence" value="ECO:0007669"/>
    <property type="project" value="UniProtKB-UniRule"/>
</dbReference>
<dbReference type="GO" id="GO:0045892">
    <property type="term" value="P:negative regulation of DNA-templated transcription"/>
    <property type="evidence" value="ECO:0007669"/>
    <property type="project" value="TreeGrafter"/>
</dbReference>
<dbReference type="CDD" id="cd00673">
    <property type="entry name" value="AlaRS_core"/>
    <property type="match status" value="1"/>
</dbReference>
<dbReference type="FunFam" id="3.10.310.40:FF:000001">
    <property type="entry name" value="Alanine--tRNA ligase"/>
    <property type="match status" value="1"/>
</dbReference>
<dbReference type="FunFam" id="3.30.54.20:FF:000001">
    <property type="entry name" value="Alanine--tRNA ligase"/>
    <property type="match status" value="1"/>
</dbReference>
<dbReference type="FunFam" id="3.30.930.10:FF:000004">
    <property type="entry name" value="Alanine--tRNA ligase"/>
    <property type="match status" value="1"/>
</dbReference>
<dbReference type="FunFam" id="3.30.980.10:FF:000004">
    <property type="entry name" value="Alanine--tRNA ligase, cytoplasmic"/>
    <property type="match status" value="1"/>
</dbReference>
<dbReference type="Gene3D" id="2.40.30.130">
    <property type="match status" value="1"/>
</dbReference>
<dbReference type="Gene3D" id="3.10.310.40">
    <property type="match status" value="1"/>
</dbReference>
<dbReference type="Gene3D" id="3.30.54.20">
    <property type="match status" value="1"/>
</dbReference>
<dbReference type="Gene3D" id="3.30.930.10">
    <property type="entry name" value="Bira Bifunctional Protein, Domain 2"/>
    <property type="match status" value="1"/>
</dbReference>
<dbReference type="Gene3D" id="3.30.980.10">
    <property type="entry name" value="Threonyl-trna Synthetase, Chain A, domain 2"/>
    <property type="match status" value="1"/>
</dbReference>
<dbReference type="HAMAP" id="MF_00036_B">
    <property type="entry name" value="Ala_tRNA_synth_B"/>
    <property type="match status" value="1"/>
</dbReference>
<dbReference type="InterPro" id="IPR045864">
    <property type="entry name" value="aa-tRNA-synth_II/BPL/LPL"/>
</dbReference>
<dbReference type="InterPro" id="IPR002318">
    <property type="entry name" value="Ala-tRNA-lgiase_IIc"/>
</dbReference>
<dbReference type="InterPro" id="IPR018162">
    <property type="entry name" value="Ala-tRNA-ligase_IIc_anticod-bd"/>
</dbReference>
<dbReference type="InterPro" id="IPR018165">
    <property type="entry name" value="Ala-tRNA-synth_IIc_core"/>
</dbReference>
<dbReference type="InterPro" id="IPR018164">
    <property type="entry name" value="Ala-tRNA-synth_IIc_N"/>
</dbReference>
<dbReference type="InterPro" id="IPR050058">
    <property type="entry name" value="Ala-tRNA_ligase"/>
</dbReference>
<dbReference type="InterPro" id="IPR023033">
    <property type="entry name" value="Ala_tRNA_ligase_euk/bac"/>
</dbReference>
<dbReference type="InterPro" id="IPR003156">
    <property type="entry name" value="DHHA1_dom"/>
</dbReference>
<dbReference type="InterPro" id="IPR018163">
    <property type="entry name" value="Thr/Ala-tRNA-synth_IIc_edit"/>
</dbReference>
<dbReference type="InterPro" id="IPR009000">
    <property type="entry name" value="Transl_B-barrel_sf"/>
</dbReference>
<dbReference type="InterPro" id="IPR012947">
    <property type="entry name" value="tRNA_SAD"/>
</dbReference>
<dbReference type="NCBIfam" id="TIGR00344">
    <property type="entry name" value="alaS"/>
    <property type="match status" value="1"/>
</dbReference>
<dbReference type="PANTHER" id="PTHR11777:SF9">
    <property type="entry name" value="ALANINE--TRNA LIGASE, CYTOPLASMIC"/>
    <property type="match status" value="1"/>
</dbReference>
<dbReference type="PANTHER" id="PTHR11777">
    <property type="entry name" value="ALANYL-TRNA SYNTHETASE"/>
    <property type="match status" value="1"/>
</dbReference>
<dbReference type="Pfam" id="PF02272">
    <property type="entry name" value="DHHA1"/>
    <property type="match status" value="1"/>
</dbReference>
<dbReference type="Pfam" id="PF01411">
    <property type="entry name" value="tRNA-synt_2c"/>
    <property type="match status" value="1"/>
</dbReference>
<dbReference type="Pfam" id="PF07973">
    <property type="entry name" value="tRNA_SAD"/>
    <property type="match status" value="1"/>
</dbReference>
<dbReference type="PRINTS" id="PR00980">
    <property type="entry name" value="TRNASYNTHALA"/>
</dbReference>
<dbReference type="SMART" id="SM00863">
    <property type="entry name" value="tRNA_SAD"/>
    <property type="match status" value="1"/>
</dbReference>
<dbReference type="SUPFAM" id="SSF55681">
    <property type="entry name" value="Class II aaRS and biotin synthetases"/>
    <property type="match status" value="1"/>
</dbReference>
<dbReference type="SUPFAM" id="SSF101353">
    <property type="entry name" value="Putative anticodon-binding domain of alanyl-tRNA synthetase (AlaRS)"/>
    <property type="match status" value="1"/>
</dbReference>
<dbReference type="SUPFAM" id="SSF55186">
    <property type="entry name" value="ThrRS/AlaRS common domain"/>
    <property type="match status" value="1"/>
</dbReference>
<dbReference type="SUPFAM" id="SSF50447">
    <property type="entry name" value="Translation proteins"/>
    <property type="match status" value="1"/>
</dbReference>
<dbReference type="PROSITE" id="PS50860">
    <property type="entry name" value="AA_TRNA_LIGASE_II_ALA"/>
    <property type="match status" value="1"/>
</dbReference>
<accession>A7GZA4</accession>
<comment type="function">
    <text evidence="1">Catalyzes the attachment of alanine to tRNA(Ala) in a two-step reaction: alanine is first activated by ATP to form Ala-AMP and then transferred to the acceptor end of tRNA(Ala). Also edits incorrectly charged Ser-tRNA(Ala) and Gly-tRNA(Ala) via its editing domain.</text>
</comment>
<comment type="catalytic activity">
    <reaction evidence="1">
        <text>tRNA(Ala) + L-alanine + ATP = L-alanyl-tRNA(Ala) + AMP + diphosphate</text>
        <dbReference type="Rhea" id="RHEA:12540"/>
        <dbReference type="Rhea" id="RHEA-COMP:9657"/>
        <dbReference type="Rhea" id="RHEA-COMP:9923"/>
        <dbReference type="ChEBI" id="CHEBI:30616"/>
        <dbReference type="ChEBI" id="CHEBI:33019"/>
        <dbReference type="ChEBI" id="CHEBI:57972"/>
        <dbReference type="ChEBI" id="CHEBI:78442"/>
        <dbReference type="ChEBI" id="CHEBI:78497"/>
        <dbReference type="ChEBI" id="CHEBI:456215"/>
        <dbReference type="EC" id="6.1.1.7"/>
    </reaction>
</comment>
<comment type="cofactor">
    <cofactor evidence="1">
        <name>Zn(2+)</name>
        <dbReference type="ChEBI" id="CHEBI:29105"/>
    </cofactor>
    <text evidence="1">Binds 1 zinc ion per subunit.</text>
</comment>
<comment type="subcellular location">
    <subcellularLocation>
        <location evidence="1">Cytoplasm</location>
    </subcellularLocation>
</comment>
<comment type="domain">
    <text evidence="1">Consists of three domains; the N-terminal catalytic domain, the editing domain and the C-terminal C-Ala domain. The editing domain removes incorrectly charged amino acids, while the C-Ala domain, along with tRNA(Ala), serves as a bridge to cooperatively bring together the editing and aminoacylation centers thus stimulating deacylation of misacylated tRNAs.</text>
</comment>
<comment type="similarity">
    <text evidence="1">Belongs to the class-II aminoacyl-tRNA synthetase family.</text>
</comment>
<keyword id="KW-0030">Aminoacyl-tRNA synthetase</keyword>
<keyword id="KW-0067">ATP-binding</keyword>
<keyword id="KW-0963">Cytoplasm</keyword>
<keyword id="KW-0436">Ligase</keyword>
<keyword id="KW-0479">Metal-binding</keyword>
<keyword id="KW-0547">Nucleotide-binding</keyword>
<keyword id="KW-0648">Protein biosynthesis</keyword>
<keyword id="KW-1185">Reference proteome</keyword>
<keyword id="KW-0694">RNA-binding</keyword>
<keyword id="KW-0820">tRNA-binding</keyword>
<keyword id="KW-0862">Zinc</keyword>
<sequence length="852" mass="94543">MQNLDVREAYLNFFKSKGHEITPSAPLVPNDATLLFTNAGMVPFKSIFTGEVPRPTPPIRTSCQTCIRAGGKHNDLDNVGYTARHHTFFEMLGNFSFGEYFKKDAIAYAWEFVTQVLKLPVDRLYVTVHESDDEAFELWARHIARDRIYRFGDHDNFWQMGDTGPCGPCSEIFYDQGGEHFNTPEDYMGGDGDRFLEIWNLVFMQYERSADGKLSPLPKPSIDTGMGLERVTAIMEGKFSNYDSSLFMPLIDEVAKLCGKPYSYDSGASYRVISDHIRSVTFLLAQGTTFDKEGRGYVLRRILRRAIRHGYLLGIKEPFMYKLVDKVCEMMGGHYTYLNEKKAAVKEQVRLEEERFLATIASGLELFNEELAKTKEIFSGETAFKLYDTYGFPLDLTADMLREKGLKVDEAKFDELMSEQKARAKAAWKGSGDKSSKGDFKQLLEEFGENKFSGYDELERQSKILALLDNDFKRVQNLRAGESGWVMFDVTPFYAQSGGQTGDTGEITGVGKVLDTQKFHGLNLSQVEVGKQIKTGDVLNLKVSDARAEIARHHSATHLLHAALRKILGTHVAQAGSNVEADRLRFDFSHPKALTSEELEMIEKFVNDAVASSAAAKTEIMDIEAAKNSGAIALFGEKYAENVRVLSLGNVSKELCGGTHVKNVSEIGAFFITKESGVSAGVRRIEAVCSRAALNLARGFRSELAEISNELKTNEPMVAIKKLKGEVRELKDKLKNIGDSHAIAFTSINDTKMGVAVVKSGDIKTMIDNYKNEFASLAILLLQVNDDKIAIAAGVKNAPIKAGEWVKMAAKILDGNGGGRDDFATAGGKNVPMIETAVKEAFEFAKEKLLNA</sequence>
<protein>
    <recommendedName>
        <fullName evidence="1">Alanine--tRNA ligase</fullName>
        <ecNumber evidence="1">6.1.1.7</ecNumber>
    </recommendedName>
    <alternativeName>
        <fullName evidence="1">Alanyl-tRNA synthetase</fullName>
        <shortName evidence="1">AlaRS</shortName>
    </alternativeName>
</protein>
<proteinExistence type="inferred from homology"/>
<name>SYA_CAMC5</name>
<reference key="1">
    <citation type="submission" date="2007-07" db="EMBL/GenBank/DDBJ databases">
        <title>Genome sequence of Campylobacter curvus 525.92 isolated from human feces.</title>
        <authorList>
            <person name="Fouts D.E."/>
            <person name="Mongodin E.F."/>
            <person name="Puiu D."/>
            <person name="Sebastian Y."/>
            <person name="Miller W.G."/>
            <person name="Mandrell R.E."/>
            <person name="Lastovica A.J."/>
            <person name="Nelson K.E."/>
        </authorList>
    </citation>
    <scope>NUCLEOTIDE SEQUENCE [LARGE SCALE GENOMIC DNA]</scope>
    <source>
        <strain>525.92</strain>
    </source>
</reference>